<name>CHKA_HUMAN</name>
<reference key="1">
    <citation type="journal article" date="1992" name="FEBS Lett.">
        <title>Cloning of a human choline kinase cDNA by complementation of the yeast cki mutation.</title>
        <authorList>
            <person name="Hosaka K."/>
            <person name="Tanaka S."/>
            <person name="Nikawa J."/>
            <person name="Yamashita S."/>
        </authorList>
    </citation>
    <scope>NUCLEOTIDE SEQUENCE [MRNA] (ISOFORM 1)</scope>
</reference>
<reference key="2">
    <citation type="journal article" date="2006" name="Nature">
        <title>Human chromosome 11 DNA sequence and analysis including novel gene identification.</title>
        <authorList>
            <person name="Taylor T.D."/>
            <person name="Noguchi H."/>
            <person name="Totoki Y."/>
            <person name="Toyoda A."/>
            <person name="Kuroki Y."/>
            <person name="Dewar K."/>
            <person name="Lloyd C."/>
            <person name="Itoh T."/>
            <person name="Takeda T."/>
            <person name="Kim D.-W."/>
            <person name="She X."/>
            <person name="Barlow K.F."/>
            <person name="Bloom T."/>
            <person name="Bruford E."/>
            <person name="Chang J.L."/>
            <person name="Cuomo C.A."/>
            <person name="Eichler E."/>
            <person name="FitzGerald M.G."/>
            <person name="Jaffe D.B."/>
            <person name="LaButti K."/>
            <person name="Nicol R."/>
            <person name="Park H.-S."/>
            <person name="Seaman C."/>
            <person name="Sougnez C."/>
            <person name="Yang X."/>
            <person name="Zimmer A.R."/>
            <person name="Zody M.C."/>
            <person name="Birren B.W."/>
            <person name="Nusbaum C."/>
            <person name="Fujiyama A."/>
            <person name="Hattori M."/>
            <person name="Rogers J."/>
            <person name="Lander E.S."/>
            <person name="Sakaki Y."/>
        </authorList>
    </citation>
    <scope>NUCLEOTIDE SEQUENCE [LARGE SCALE GENOMIC DNA]</scope>
</reference>
<reference key="3">
    <citation type="journal article" date="2004" name="Genome Res.">
        <title>The status, quality, and expansion of the NIH full-length cDNA project: the Mammalian Gene Collection (MGC).</title>
        <authorList>
            <consortium name="The MGC Project Team"/>
        </authorList>
    </citation>
    <scope>NUCLEOTIDE SEQUENCE [LARGE SCALE MRNA] (ISOFORM 2)</scope>
    <scope>VARIANTS GLY-220 AND GLN-422</scope>
    <source>
        <tissue>Testis</tissue>
    </source>
</reference>
<reference key="4">
    <citation type="journal article" date="2009" name="PLoS ONE">
        <title>Differential role of human choline kinase alpha and beta enzymes in lipid metabolism: implications in cancer onset and treatment.</title>
        <authorList>
            <person name="Gallego-Ortega D."/>
            <person name="Ramirez de Molina A."/>
            <person name="Ramos M.A."/>
            <person name="Valdes-Mora F."/>
            <person name="Barderas M.G."/>
            <person name="Sarmentero-Estrada J."/>
            <person name="Lacal J.C."/>
        </authorList>
    </citation>
    <scope>FUNCTION</scope>
    <scope>CATALYTIC ACTIVITY</scope>
    <scope>BIOPHYSICOCHEMICAL PROPERTIES</scope>
</reference>
<reference key="5">
    <citation type="journal article" date="2017" name="J. Virol.">
        <title>Hepatitis C Virus Subverts Human Choline Kinase-alpha To Bridge Phosphatidylinositol-4-Kinase IIIalpha (PI4KIIIalpha) and NS5A and Upregulates PI4KIIIalpha Activation, Thereby Promoting the Translocation of the Ternary Complex to the Endoplasmic Reticulum for Viral Replication.</title>
        <authorList>
            <person name="Wong M.T."/>
            <person name="Chen S.S."/>
        </authorList>
    </citation>
    <scope>IDENTIFICATION IN A COMPLEX WITH PI4KA AND HCV NON-STRUCTURAL PROTEIN 5A (MICROBIAL INFECTION)</scope>
</reference>
<reference key="6">
    <citation type="journal article" date="2021" name="Mol. Cell">
        <title>Choline kinase alpha 2 acts as a protein kinase to promote lipolysis of lipid droplets.</title>
        <authorList>
            <person name="Liu R."/>
            <person name="Lee J.H."/>
            <person name="Li J."/>
            <person name="Yu R."/>
            <person name="Tan L."/>
            <person name="Xia Y."/>
            <person name="Zheng Y."/>
            <person name="Bian X.L."/>
            <person name="Lorenzi P.L."/>
            <person name="Chen Q."/>
            <person name="Lu Z."/>
        </authorList>
    </citation>
    <scope>FUNCTION (ISOFORM 1)</scope>
    <scope>CATALYTIC ACTIVITY (ISOFORM 1)</scope>
    <scope>SUBCELLULAR LOCATION (ISOFORM 1)</scope>
    <scope>SUBUNIT (ISOFORM 1)</scope>
    <scope>PHOSPHORYLATION AT SER-279</scope>
    <scope>ACETYLATION AT LYS-247</scope>
    <scope>MUTAGENESIS OF GLU-175; 177-MET--LEU-179; 182-VAL--PHE-184; 186-ILE-LEU-187; LYS-247 AND SER-279</scope>
</reference>
<reference key="7">
    <citation type="journal article" date="2022" name="Brain">
        <title>Bi-allelic variants in CHKA cause a neurodevelopmental disorder with epilepsy and microcephaly.</title>
        <authorList>
            <person name="Kloeckner C."/>
            <person name="Fernandez-Murray J.P."/>
            <person name="Tavasoli M."/>
            <person name="Sticht H."/>
            <person name="Stoltenburg-Didinger G."/>
            <person name="Scholle L.M."/>
            <person name="Bakhtiari S."/>
            <person name="Kruer M.C."/>
            <person name="Darvish H."/>
            <person name="Firouzabadi S.G."/>
            <person name="Pagnozzi A."/>
            <person name="Shukla A."/>
            <person name="Girisha K.M."/>
            <person name="Narayanan D.L."/>
            <person name="Kaur P."/>
            <person name="Maroofian R."/>
            <person name="Zaki M.S."/>
            <person name="Noureldeen M.M."/>
            <person name="Merkenschlager A."/>
            <person name="Gburek-Augustat J."/>
            <person name="Cali E."/>
            <person name="Banu S."/>
            <person name="Nahar K."/>
            <person name="Efthymiou S."/>
            <person name="Houlden H."/>
            <person name="Jamra R.A."/>
            <person name="Williams J."/>
            <person name="McMaster C.R."/>
            <person name="Platzer K."/>
        </authorList>
    </citation>
    <scope>INVOLVEMENT IN NEDMIMS</scope>
    <scope>VARIANTS NEDMIMS TRP-141; SER-194 AND LEU-341</scope>
    <scope>CHARACTERIZATION OF VARIANTS NEDMIMS TRP-141 AND SER-194</scope>
    <scope>CATALYTIC ACTIVITY</scope>
</reference>
<reference evidence="17 18 19" key="8">
    <citation type="journal article" date="2006" name="J. Mol. Biol.">
        <title>Elucidation of human choline kinase crystal structures in complex with the products ADP or phosphocholine.</title>
        <authorList>
            <person name="Malito E."/>
            <person name="Sekulic N."/>
            <person name="Too W.C."/>
            <person name="Konrad M."/>
            <person name="Lavie A."/>
        </authorList>
    </citation>
    <scope>X-RAY CRYSTALLOGRAPHY (2.15 ANGSTROMS) OF 50-439 IN COMPLEX WITH ADP AND PHOSPHOCHOLINE</scope>
    <scope>FUNCTION</scope>
    <scope>CATALYTIC ACTIVITY</scope>
    <scope>SUBUNIT</scope>
    <scope>BIOPHYSICOCHEMICAL PROPERTIES</scope>
</reference>
<reference evidence="20" key="9">
    <citation type="journal article" date="2010" name="J. Biol. Chem.">
        <title>Crystal structures of human choline kinase isoforms in complex with hemicholinium-3: single amino acid near the active site influences inhibitor sensitivity.</title>
        <authorList>
            <person name="Hong B.S."/>
            <person name="Allali-Hassani A."/>
            <person name="Tempel W."/>
            <person name="Finerty P.J. Jr."/>
            <person name="Mackenzie F."/>
            <person name="Dimov S."/>
            <person name="Vedadi M."/>
            <person name="Park H.W."/>
        </authorList>
    </citation>
    <scope>X-RAY CRYSTALLOGRAPHY (1.70 ANGSTROMS) OF 75-457 IN COMPLEX WITH HEMICHOLINIUM-3 AND ADP</scope>
</reference>
<reference evidence="21" key="10">
    <citation type="journal article" date="2013" name="Biochim. Biophys. Acta">
        <title>Kinetic and mechanistic characterisation of Choline Kinase-alpha.</title>
        <authorList>
            <person name="Hudson C.S."/>
            <person name="Knegtel R.M."/>
            <person name="Brown K."/>
            <person name="Charlton P.A."/>
            <person name="Pollard J.R."/>
        </authorList>
    </citation>
    <scope>X-RAY CRYSTALLOGRAPHY (2.40 ANGSTROMS)</scope>
    <scope>FUNCTION</scope>
    <scope>CATALYTIC ACTIVITY</scope>
    <scope>BIOPHYSICOCHEMICAL PROPERTIES</scope>
    <scope>PATHWAY</scope>
</reference>
<evidence type="ECO:0000250" key="1">
    <source>
        <dbReference type="UniProtKB" id="O54804"/>
    </source>
</evidence>
<evidence type="ECO:0000256" key="2">
    <source>
        <dbReference type="SAM" id="MobiDB-lite"/>
    </source>
</evidence>
<evidence type="ECO:0000269" key="3">
    <source>
    </source>
</evidence>
<evidence type="ECO:0000269" key="4">
    <source>
    </source>
</evidence>
<evidence type="ECO:0000269" key="5">
    <source>
    </source>
</evidence>
<evidence type="ECO:0000269" key="6">
    <source>
    </source>
</evidence>
<evidence type="ECO:0000269" key="7">
    <source>
    </source>
</evidence>
<evidence type="ECO:0000269" key="8">
    <source>
    </source>
</evidence>
<evidence type="ECO:0000269" key="9">
    <source>
    </source>
</evidence>
<evidence type="ECO:0000269" key="10">
    <source>
    </source>
</evidence>
<evidence type="ECO:0000303" key="11">
    <source>
    </source>
</evidence>
<evidence type="ECO:0000303" key="12">
    <source>
    </source>
</evidence>
<evidence type="ECO:0000303" key="13">
    <source>
    </source>
</evidence>
<evidence type="ECO:0000305" key="14"/>
<evidence type="ECO:0000305" key="15">
    <source>
    </source>
</evidence>
<evidence type="ECO:0000305" key="16">
    <source>
    </source>
</evidence>
<evidence type="ECO:0007744" key="17">
    <source>
        <dbReference type="PDB" id="2CKO"/>
    </source>
</evidence>
<evidence type="ECO:0007744" key="18">
    <source>
        <dbReference type="PDB" id="2CKP"/>
    </source>
</evidence>
<evidence type="ECO:0007744" key="19">
    <source>
        <dbReference type="PDB" id="2CKQ"/>
    </source>
</evidence>
<evidence type="ECO:0007744" key="20">
    <source>
        <dbReference type="PDB" id="3G15"/>
    </source>
</evidence>
<evidence type="ECO:0007744" key="21">
    <source>
        <dbReference type="PDB" id="4DA5"/>
    </source>
</evidence>
<evidence type="ECO:0007829" key="22">
    <source>
        <dbReference type="PDB" id="3G15"/>
    </source>
</evidence>
<evidence type="ECO:0007829" key="23">
    <source>
        <dbReference type="PDB" id="3ZM9"/>
    </source>
</evidence>
<evidence type="ECO:0007829" key="24">
    <source>
        <dbReference type="PDB" id="5FTG"/>
    </source>
</evidence>
<evidence type="ECO:0007829" key="25">
    <source>
        <dbReference type="PDB" id="5FUT"/>
    </source>
</evidence>
<protein>
    <recommendedName>
        <fullName>Choline kinase alpha</fullName>
        <shortName>CK</shortName>
        <ecNumber evidence="4 5 10">2.7.1.32</ecNumber>
    </recommendedName>
    <alternativeName>
        <fullName>CHETK-alpha</fullName>
    </alternativeName>
    <alternativeName>
        <fullName>Ethanolamine kinase</fullName>
        <shortName>EK</shortName>
        <ecNumber evidence="4 5">2.7.1.82</ecNumber>
    </alternativeName>
</protein>
<gene>
    <name type="primary">CHKA</name>
    <name type="synonym">CHK</name>
    <name evidence="12" type="synonym">CKI</name>
</gene>
<keyword id="KW-0002">3D-structure</keyword>
<keyword id="KW-0007">Acetylation</keyword>
<keyword id="KW-0025">Alternative splicing</keyword>
<keyword id="KW-0067">ATP-binding</keyword>
<keyword id="KW-0963">Cytoplasm</keyword>
<keyword id="KW-0225">Disease variant</keyword>
<keyword id="KW-0887">Epilepsy</keyword>
<keyword id="KW-0991">Intellectual disability</keyword>
<keyword id="KW-0418">Kinase</keyword>
<keyword id="KW-0444">Lipid biosynthesis</keyword>
<keyword id="KW-0551">Lipid droplet</keyword>
<keyword id="KW-0443">Lipid metabolism</keyword>
<keyword id="KW-0547">Nucleotide-binding</keyword>
<keyword id="KW-0594">Phospholipid biosynthesis</keyword>
<keyword id="KW-1208">Phospholipid metabolism</keyword>
<keyword id="KW-0597">Phosphoprotein</keyword>
<keyword id="KW-1267">Proteomics identification</keyword>
<keyword id="KW-1185">Reference proteome</keyword>
<keyword id="KW-0808">Transferase</keyword>
<keyword id="KW-0829">Tyrosine-protein kinase</keyword>
<organism>
    <name type="scientific">Homo sapiens</name>
    <name type="common">Human</name>
    <dbReference type="NCBI Taxonomy" id="9606"/>
    <lineage>
        <taxon>Eukaryota</taxon>
        <taxon>Metazoa</taxon>
        <taxon>Chordata</taxon>
        <taxon>Craniata</taxon>
        <taxon>Vertebrata</taxon>
        <taxon>Euteleostomi</taxon>
        <taxon>Mammalia</taxon>
        <taxon>Eutheria</taxon>
        <taxon>Euarchontoglires</taxon>
        <taxon>Primates</taxon>
        <taxon>Haplorrhini</taxon>
        <taxon>Catarrhini</taxon>
        <taxon>Hominidae</taxon>
        <taxon>Homo</taxon>
    </lineage>
</organism>
<comment type="function">
    <text evidence="4 5 7 9">Plays a key role in phospholipid biosynthesis by catalyzing the phosphorylation of free choline to phosphocholine, the first step in phosphatidylcholine biosynthesis (PubMed:17007874, PubMed:19915674, PubMed:23416529, PubMed:34077757). Also phosphorylates ethanolamine, thereby contributing to phosphatidylethanolamine biosynthesis (PubMed:17007874, PubMed:19915674). Has higher activity with choline (PubMed:17007874, PubMed:19915674). May contribute to tumor cell growth (PubMed:19915674).</text>
</comment>
<comment type="function">
    <molecule>Isoform 1</molecule>
    <text evidence="9">This isoform plays a key role in lipolysis of lipid droplets following glucose deprivation (PubMed:34077757). In response to glucose deprivation, phosphorylated by AMPK, promoting localization to lipid droplets (PubMed:34077757). Phosphorylation is followed by acetylation by KAT5, leading to dissociation of the homodimer into a monomer (PubMed:34077757). Monomeric CHKA isoform 1 is converted into a tyrosine-protein kinase, which phosphorylates lipid droplet structural proteins PLIN2 and PLIN3, leading to lipolysis of lipid droplets (PubMed:34077757).</text>
</comment>
<comment type="catalytic activity">
    <reaction evidence="4 5 7 9 10">
        <text>choline + ATP = phosphocholine + ADP + H(+)</text>
        <dbReference type="Rhea" id="RHEA:12837"/>
        <dbReference type="ChEBI" id="CHEBI:15354"/>
        <dbReference type="ChEBI" id="CHEBI:15378"/>
        <dbReference type="ChEBI" id="CHEBI:30616"/>
        <dbReference type="ChEBI" id="CHEBI:295975"/>
        <dbReference type="ChEBI" id="CHEBI:456216"/>
        <dbReference type="EC" id="2.7.1.32"/>
    </reaction>
    <physiologicalReaction direction="left-to-right" evidence="4 7 16">
        <dbReference type="Rhea" id="RHEA:12838"/>
    </physiologicalReaction>
</comment>
<comment type="catalytic activity">
    <reaction evidence="4 5">
        <text>ethanolamine + ATP = phosphoethanolamine + ADP + H(+)</text>
        <dbReference type="Rhea" id="RHEA:13069"/>
        <dbReference type="ChEBI" id="CHEBI:15378"/>
        <dbReference type="ChEBI" id="CHEBI:30616"/>
        <dbReference type="ChEBI" id="CHEBI:57603"/>
        <dbReference type="ChEBI" id="CHEBI:58190"/>
        <dbReference type="ChEBI" id="CHEBI:456216"/>
        <dbReference type="EC" id="2.7.1.82"/>
    </reaction>
    <physiologicalReaction direction="left-to-right" evidence="4 16">
        <dbReference type="Rhea" id="RHEA:13070"/>
    </physiologicalReaction>
</comment>
<comment type="catalytic activity">
    <molecule>Isoform 1</molecule>
    <reaction evidence="9">
        <text>L-tyrosyl-[protein] + ATP = O-phospho-L-tyrosyl-[protein] + ADP + H(+)</text>
        <dbReference type="Rhea" id="RHEA:10596"/>
        <dbReference type="Rhea" id="RHEA-COMP:10136"/>
        <dbReference type="Rhea" id="RHEA-COMP:20101"/>
        <dbReference type="ChEBI" id="CHEBI:15378"/>
        <dbReference type="ChEBI" id="CHEBI:30616"/>
        <dbReference type="ChEBI" id="CHEBI:46858"/>
        <dbReference type="ChEBI" id="CHEBI:61978"/>
        <dbReference type="ChEBI" id="CHEBI:456216"/>
    </reaction>
    <physiologicalReaction direction="left-to-right" evidence="9">
        <dbReference type="Rhea" id="RHEA:10597"/>
    </physiologicalReaction>
</comment>
<comment type="activity regulation">
    <text evidence="9">Homodimerization or heterodimerization is required for the choline and ethanolamine kinase activities.</text>
</comment>
<comment type="biophysicochemical properties">
    <kinetics>
        <KM evidence="7">188 uM for choline</KM>
        <KM evidence="4 5">0.2 mM for choline</KM>
        <KM evidence="5 7">486 uM for ATP</KM>
        <KM evidence="4 5">0.4 mM for ATP</KM>
        <KM evidence="4 5">12 mM for ethanolamine</KM>
        <text evidence="7">kcat is 71 sec(-1).</text>
    </kinetics>
</comment>
<comment type="pathway">
    <text evidence="7 15 16">Phospholipid metabolism; phosphatidylcholine biosynthesis; phosphocholine from choline: step 1/1.</text>
</comment>
<comment type="pathway">
    <text evidence="15 16">Phospholipid metabolism; phosphatidylethanolamine biosynthesis; phosphatidylethanolamine from ethanolamine: step 1/3.</text>
</comment>
<comment type="subunit">
    <text evidence="1 4 6 9">Homodimer (PubMed:17007874, PubMed:20299452, PubMed:34077757). Heterodimer with CHKB (By similarity).</text>
</comment>
<comment type="subunit">
    <molecule>Isoform 1</molecule>
    <text evidence="9">Monomer; acetylation by KAT5 promotes dissociation of the homodimer and monomerization.</text>
</comment>
<comment type="subunit">
    <text evidence="8">(Microbial infection) Interacts with PI4KA/PI4KIIIalpha; CHKA bridges PI4KA/PI4KIIIalpha and hepatitis C virus (HCV) non-structural protein 5A (NS5A) and potentiates NS5A-stimulated PI4KA activity, which then facilitates the targeting of the ternary complex to the ER for viral replication.</text>
</comment>
<comment type="subcellular location">
    <subcellularLocation>
        <location evidence="9">Cytoplasm</location>
        <location evidence="9">Cytosol</location>
    </subcellularLocation>
</comment>
<comment type="subcellular location">
    <molecule>Isoform 1</molecule>
    <subcellularLocation>
        <location evidence="9">Lipid droplet</location>
    </subcellularLocation>
    <text evidence="9">Isoform 1 localizes to lipid droplets following phosphorylation by AMPK.</text>
</comment>
<comment type="alternative products">
    <event type="alternative splicing"/>
    <isoform>
        <id>P35790-1</id>
        <name>1</name>
        <name evidence="13">CHKalpha2</name>
        <name evidence="13">alpha-2</name>
        <sequence type="displayed"/>
    </isoform>
    <isoform>
        <id>P35790-2</id>
        <name>2</name>
        <name evidence="13">CHKalpha1</name>
        <name evidence="13">alpha-1</name>
        <sequence type="described" ref="VSP_009683"/>
    </isoform>
</comment>
<comment type="PTM">
    <molecule>Isoform 1</molecule>
    <text evidence="9">Phosphorylated at Ser-279 by AMPK in response to glucose deprivation, leading to localization to lipid droplets.</text>
</comment>
<comment type="PTM">
    <molecule>Isoform 1</molecule>
    <text evidence="9">Acetylated by KAT5 at Lys-247 following phosphorylation by AMPK, leading to monomerization and conversion into a tyrosine-protein kinase.</text>
</comment>
<comment type="disease" evidence="10">
    <disease id="DI-06497">
        <name>Neurodevelopmental disorder with microcephaly, movement abnormalities, and seizures</name>
        <acronym>NEDMIMS</acronym>
        <description>An autosomal recessive neurodevelopmental disorder characterized by severe global developmental delay, impaired intellectual development, microcephaly, early-onset seizures, and movement abnormalities.</description>
        <dbReference type="MIM" id="620023"/>
    </disease>
    <text>The disease is caused by variants affecting the gene represented in this entry.</text>
</comment>
<comment type="similarity">
    <text evidence="14">Belongs to the choline/ethanolamine kinase family.</text>
</comment>
<comment type="online information" name="Atlas of Genetics and Cytogenetics in Oncology and Haematology">
    <link uri="https://atlasgeneticsoncology.org/gene/44009/CHKA"/>
</comment>
<accession>P35790</accession>
<accession>Q8NE29</accession>
<dbReference type="EC" id="2.7.1.32" evidence="4 5 10"/>
<dbReference type="EC" id="2.7.1.82" evidence="4 5"/>
<dbReference type="EMBL" id="D10704">
    <property type="protein sequence ID" value="BAA01547.1"/>
    <property type="molecule type" value="mRNA"/>
</dbReference>
<dbReference type="EMBL" id="AP002807">
    <property type="status" value="NOT_ANNOTATED_CDS"/>
    <property type="molecule type" value="Genomic_DNA"/>
</dbReference>
<dbReference type="EMBL" id="AP002992">
    <property type="status" value="NOT_ANNOTATED_CDS"/>
    <property type="molecule type" value="Genomic_DNA"/>
</dbReference>
<dbReference type="EMBL" id="BC036471">
    <property type="protein sequence ID" value="AAH36471.1"/>
    <property type="molecule type" value="mRNA"/>
</dbReference>
<dbReference type="CCDS" id="CCDS8178.1">
    <molecule id="P35790-1"/>
</dbReference>
<dbReference type="CCDS" id="CCDS8179.1">
    <molecule id="P35790-2"/>
</dbReference>
<dbReference type="PIR" id="S23104">
    <property type="entry name" value="S23104"/>
</dbReference>
<dbReference type="RefSeq" id="NP_001268.2">
    <molecule id="P35790-1"/>
    <property type="nucleotide sequence ID" value="NM_001277.2"/>
</dbReference>
<dbReference type="RefSeq" id="NP_997634.1">
    <molecule id="P35790-2"/>
    <property type="nucleotide sequence ID" value="NM_212469.2"/>
</dbReference>
<dbReference type="PDB" id="2CKO">
    <property type="method" value="X-ray"/>
    <property type="resolution" value="2.15 A"/>
    <property type="chains" value="A/B=50-457"/>
</dbReference>
<dbReference type="PDB" id="2CKP">
    <property type="method" value="X-ray"/>
    <property type="resolution" value="3.10 A"/>
    <property type="chains" value="A/B=50-457"/>
</dbReference>
<dbReference type="PDB" id="2CKQ">
    <property type="method" value="X-ray"/>
    <property type="resolution" value="2.40 A"/>
    <property type="chains" value="A/B=50-457"/>
</dbReference>
<dbReference type="PDB" id="2I7Q">
    <property type="method" value="X-ray"/>
    <property type="resolution" value="1.90 A"/>
    <property type="chains" value="A=75-457"/>
</dbReference>
<dbReference type="PDB" id="3F2R">
    <property type="method" value="X-ray"/>
    <property type="resolution" value="2.35 A"/>
    <property type="chains" value="A/B=75-457"/>
</dbReference>
<dbReference type="PDB" id="3G15">
    <property type="method" value="X-ray"/>
    <property type="resolution" value="1.70 A"/>
    <property type="chains" value="A/B=75-457"/>
</dbReference>
<dbReference type="PDB" id="3ZM9">
    <property type="method" value="X-ray"/>
    <property type="resolution" value="1.90 A"/>
    <property type="chains" value="A/B=75-457"/>
</dbReference>
<dbReference type="PDB" id="4BR3">
    <property type="method" value="X-ray"/>
    <property type="resolution" value="2.20 A"/>
    <property type="chains" value="A/B=75-457"/>
</dbReference>
<dbReference type="PDB" id="4CG8">
    <property type="method" value="X-ray"/>
    <property type="resolution" value="1.75 A"/>
    <property type="chains" value="A=75-457"/>
</dbReference>
<dbReference type="PDB" id="4CG9">
    <property type="method" value="X-ray"/>
    <property type="resolution" value="1.83 A"/>
    <property type="chains" value="A=75-457"/>
</dbReference>
<dbReference type="PDB" id="4CGA">
    <property type="method" value="X-ray"/>
    <property type="resolution" value="1.74 A"/>
    <property type="chains" value="A=75-457"/>
</dbReference>
<dbReference type="PDB" id="4DA5">
    <property type="method" value="X-ray"/>
    <property type="resolution" value="2.40 A"/>
    <property type="chains" value="A/B=1-457"/>
</dbReference>
<dbReference type="PDB" id="5AFV">
    <property type="method" value="X-ray"/>
    <property type="resolution" value="2.25 A"/>
    <property type="chains" value="A/B=80-457"/>
</dbReference>
<dbReference type="PDB" id="5EQE">
    <property type="method" value="X-ray"/>
    <property type="resolution" value="2.40 A"/>
    <property type="chains" value="A/B=75-457"/>
</dbReference>
<dbReference type="PDB" id="5EQP">
    <property type="method" value="X-ray"/>
    <property type="resolution" value="2.35 A"/>
    <property type="chains" value="A/B=75-457"/>
</dbReference>
<dbReference type="PDB" id="5EQY">
    <property type="method" value="X-ray"/>
    <property type="resolution" value="2.50 A"/>
    <property type="chains" value="A/B=75-457"/>
</dbReference>
<dbReference type="PDB" id="5FTG">
    <property type="method" value="X-ray"/>
    <property type="resolution" value="1.45 A"/>
    <property type="chains" value="A=80-457"/>
</dbReference>
<dbReference type="PDB" id="5FUT">
    <property type="method" value="X-ray"/>
    <property type="resolution" value="1.60 A"/>
    <property type="chains" value="A=80-457"/>
</dbReference>
<dbReference type="PDB" id="5W6O">
    <property type="method" value="X-ray"/>
    <property type="resolution" value="2.35 A"/>
    <property type="chains" value="A/B=80-457"/>
</dbReference>
<dbReference type="PDB" id="7A04">
    <property type="method" value="X-ray"/>
    <property type="resolution" value="2.15 A"/>
    <property type="chains" value="A/B=75-457"/>
</dbReference>
<dbReference type="PDB" id="7A06">
    <property type="method" value="X-ray"/>
    <property type="resolution" value="1.80 A"/>
    <property type="chains" value="A=75-457"/>
</dbReference>
<dbReference type="PDB" id="7NB1">
    <property type="method" value="X-ray"/>
    <property type="resolution" value="2.30 A"/>
    <property type="chains" value="AAA/BBB=75-457"/>
</dbReference>
<dbReference type="PDB" id="7NB2">
    <property type="method" value="X-ray"/>
    <property type="resolution" value="2.40 A"/>
    <property type="chains" value="AAA/BBB=75-457"/>
</dbReference>
<dbReference type="PDB" id="7NB3">
    <property type="method" value="X-ray"/>
    <property type="resolution" value="2.00 A"/>
    <property type="chains" value="AAA/BBB=75-457"/>
</dbReference>
<dbReference type="PDB" id="8BI5">
    <property type="method" value="X-ray"/>
    <property type="resolution" value="2.50 A"/>
    <property type="chains" value="A/B=1-457"/>
</dbReference>
<dbReference type="PDB" id="8BI6">
    <property type="method" value="X-ray"/>
    <property type="resolution" value="2.40 A"/>
    <property type="chains" value="A/B=1-457"/>
</dbReference>
<dbReference type="PDBsum" id="2CKO"/>
<dbReference type="PDBsum" id="2CKP"/>
<dbReference type="PDBsum" id="2CKQ"/>
<dbReference type="PDBsum" id="2I7Q"/>
<dbReference type="PDBsum" id="3F2R"/>
<dbReference type="PDBsum" id="3G15"/>
<dbReference type="PDBsum" id="3ZM9"/>
<dbReference type="PDBsum" id="4BR3"/>
<dbReference type="PDBsum" id="4CG8"/>
<dbReference type="PDBsum" id="4CG9"/>
<dbReference type="PDBsum" id="4CGA"/>
<dbReference type="PDBsum" id="4DA5"/>
<dbReference type="PDBsum" id="5AFV"/>
<dbReference type="PDBsum" id="5EQE"/>
<dbReference type="PDBsum" id="5EQP"/>
<dbReference type="PDBsum" id="5EQY"/>
<dbReference type="PDBsum" id="5FTG"/>
<dbReference type="PDBsum" id="5FUT"/>
<dbReference type="PDBsum" id="5W6O"/>
<dbReference type="PDBsum" id="7A04"/>
<dbReference type="PDBsum" id="7A06"/>
<dbReference type="PDBsum" id="7NB1"/>
<dbReference type="PDBsum" id="7NB2"/>
<dbReference type="PDBsum" id="7NB3"/>
<dbReference type="PDBsum" id="8BI5"/>
<dbReference type="PDBsum" id="8BI6"/>
<dbReference type="SMR" id="P35790"/>
<dbReference type="BioGRID" id="107543">
    <property type="interactions" value="12"/>
</dbReference>
<dbReference type="FunCoup" id="P35790">
    <property type="interactions" value="1360"/>
</dbReference>
<dbReference type="IntAct" id="P35790">
    <property type="interactions" value="2"/>
</dbReference>
<dbReference type="STRING" id="9606.ENSP00000265689"/>
<dbReference type="BindingDB" id="P35790"/>
<dbReference type="ChEMBL" id="CHEMBL3117"/>
<dbReference type="DrugBank" id="DB00122">
    <property type="generic name" value="Choline"/>
</dbReference>
<dbReference type="DrugBank" id="DB14006">
    <property type="generic name" value="Choline salicylate"/>
</dbReference>
<dbReference type="SwissLipids" id="SLP:000001746">
    <molecule id="P35790-1"/>
</dbReference>
<dbReference type="iPTMnet" id="P35790"/>
<dbReference type="PhosphoSitePlus" id="P35790"/>
<dbReference type="SwissPalm" id="P35790"/>
<dbReference type="BioMuta" id="CHKA"/>
<dbReference type="DMDM" id="226694197"/>
<dbReference type="jPOST" id="P35790"/>
<dbReference type="MassIVE" id="P35790"/>
<dbReference type="PaxDb" id="9606-ENSP00000265689"/>
<dbReference type="PeptideAtlas" id="P35790"/>
<dbReference type="ProteomicsDB" id="55154">
    <molecule id="P35790-1"/>
</dbReference>
<dbReference type="ProteomicsDB" id="55155">
    <molecule id="P35790-2"/>
</dbReference>
<dbReference type="Pumba" id="P35790"/>
<dbReference type="Antibodypedia" id="16639">
    <property type="antibodies" value="224 antibodies from 29 providers"/>
</dbReference>
<dbReference type="CPTC" id="P35790">
    <property type="antibodies" value="3 antibodies"/>
</dbReference>
<dbReference type="DNASU" id="1119"/>
<dbReference type="Ensembl" id="ENST00000265689.9">
    <molecule id="P35790-1"/>
    <property type="protein sequence ID" value="ENSP00000265689.4"/>
    <property type="gene ID" value="ENSG00000110721.12"/>
</dbReference>
<dbReference type="Ensembl" id="ENST00000356135.9">
    <molecule id="P35790-2"/>
    <property type="protein sequence ID" value="ENSP00000348454.4"/>
    <property type="gene ID" value="ENSG00000110721.12"/>
</dbReference>
<dbReference type="GeneID" id="1119"/>
<dbReference type="KEGG" id="hsa:1119"/>
<dbReference type="MANE-Select" id="ENST00000265689.9">
    <property type="protein sequence ID" value="ENSP00000265689.4"/>
    <property type="RefSeq nucleotide sequence ID" value="NM_001277.3"/>
    <property type="RefSeq protein sequence ID" value="NP_001268.2"/>
</dbReference>
<dbReference type="UCSC" id="uc001onj.4">
    <molecule id="P35790-1"/>
    <property type="organism name" value="human"/>
</dbReference>
<dbReference type="AGR" id="HGNC:1937"/>
<dbReference type="CTD" id="1119"/>
<dbReference type="DisGeNET" id="1119"/>
<dbReference type="GeneCards" id="CHKA"/>
<dbReference type="HGNC" id="HGNC:1937">
    <property type="gene designation" value="CHKA"/>
</dbReference>
<dbReference type="HPA" id="ENSG00000110721">
    <property type="expression patterns" value="Low tissue specificity"/>
</dbReference>
<dbReference type="MalaCards" id="CHKA"/>
<dbReference type="MIM" id="118491">
    <property type="type" value="gene"/>
</dbReference>
<dbReference type="MIM" id="620023">
    <property type="type" value="phenotype"/>
</dbReference>
<dbReference type="neXtProt" id="NX_P35790"/>
<dbReference type="OpenTargets" id="ENSG00000110721"/>
<dbReference type="Orphanet" id="88616">
    <property type="disease" value="Autosomal recessive non-syndromic intellectual disability"/>
</dbReference>
<dbReference type="PharmGKB" id="PA26468"/>
<dbReference type="VEuPathDB" id="HostDB:ENSG00000110721"/>
<dbReference type="eggNOG" id="KOG2686">
    <property type="taxonomic scope" value="Eukaryota"/>
</dbReference>
<dbReference type="GeneTree" id="ENSGT00950000182939"/>
<dbReference type="HOGENOM" id="CLU_012712_2_1_1"/>
<dbReference type="InParanoid" id="P35790"/>
<dbReference type="OMA" id="EAPYYKI"/>
<dbReference type="OrthoDB" id="3649325at2759"/>
<dbReference type="PAN-GO" id="P35790">
    <property type="GO annotations" value="5 GO annotations based on evolutionary models"/>
</dbReference>
<dbReference type="PhylomeDB" id="P35790"/>
<dbReference type="TreeFam" id="TF313549"/>
<dbReference type="BioCyc" id="MetaCyc:HS03334-MONOMER"/>
<dbReference type="BRENDA" id="2.7.1.32">
    <property type="organism ID" value="2681"/>
</dbReference>
<dbReference type="PathwayCommons" id="P35790"/>
<dbReference type="Reactome" id="R-HSA-1483191">
    <property type="pathway name" value="Synthesis of PC"/>
</dbReference>
<dbReference type="Reactome" id="R-HSA-1483213">
    <property type="pathway name" value="Synthesis of PE"/>
</dbReference>
<dbReference type="SABIO-RK" id="P35790"/>
<dbReference type="SignaLink" id="P35790"/>
<dbReference type="SIGNOR" id="P35790"/>
<dbReference type="UniPathway" id="UPA00558">
    <property type="reaction ID" value="UER00741"/>
</dbReference>
<dbReference type="UniPathway" id="UPA00753">
    <property type="reaction ID" value="UER00737"/>
</dbReference>
<dbReference type="BioGRID-ORCS" id="1119">
    <property type="hits" value="134 hits in 1170 CRISPR screens"/>
</dbReference>
<dbReference type="ChiTaRS" id="CHKA">
    <property type="organism name" value="human"/>
</dbReference>
<dbReference type="EvolutionaryTrace" id="P35790"/>
<dbReference type="GeneWiki" id="CHKA"/>
<dbReference type="GenomeRNAi" id="1119"/>
<dbReference type="Pharos" id="P35790">
    <property type="development level" value="Tchem"/>
</dbReference>
<dbReference type="PRO" id="PR:P35790"/>
<dbReference type="Proteomes" id="UP000005640">
    <property type="component" value="Chromosome 11"/>
</dbReference>
<dbReference type="RNAct" id="P35790">
    <property type="molecule type" value="protein"/>
</dbReference>
<dbReference type="Bgee" id="ENSG00000110721">
    <property type="expression patterns" value="Expressed in left testis and 176 other cell types or tissues"/>
</dbReference>
<dbReference type="ExpressionAtlas" id="P35790">
    <property type="expression patterns" value="baseline and differential"/>
</dbReference>
<dbReference type="GO" id="GO:0005737">
    <property type="term" value="C:cytoplasm"/>
    <property type="evidence" value="ECO:0000318"/>
    <property type="project" value="GO_Central"/>
</dbReference>
<dbReference type="GO" id="GO:0005829">
    <property type="term" value="C:cytosol"/>
    <property type="evidence" value="ECO:0000314"/>
    <property type="project" value="UniProt"/>
</dbReference>
<dbReference type="GO" id="GO:0005811">
    <property type="term" value="C:lipid droplet"/>
    <property type="evidence" value="ECO:0000314"/>
    <property type="project" value="UniProtKB"/>
</dbReference>
<dbReference type="GO" id="GO:0005524">
    <property type="term" value="F:ATP binding"/>
    <property type="evidence" value="ECO:0007669"/>
    <property type="project" value="UniProtKB-KW"/>
</dbReference>
<dbReference type="GO" id="GO:0004103">
    <property type="term" value="F:choline kinase activity"/>
    <property type="evidence" value="ECO:0000314"/>
    <property type="project" value="UniProt"/>
</dbReference>
<dbReference type="GO" id="GO:0004104">
    <property type="term" value="F:cholinesterase activity"/>
    <property type="evidence" value="ECO:0007669"/>
    <property type="project" value="Ensembl"/>
</dbReference>
<dbReference type="GO" id="GO:0004305">
    <property type="term" value="F:ethanolamine kinase activity"/>
    <property type="evidence" value="ECO:0000314"/>
    <property type="project" value="UniProt"/>
</dbReference>
<dbReference type="GO" id="GO:0042803">
    <property type="term" value="F:protein homodimerization activity"/>
    <property type="evidence" value="ECO:0000314"/>
    <property type="project" value="UniProt"/>
</dbReference>
<dbReference type="GO" id="GO:0004713">
    <property type="term" value="F:protein tyrosine kinase activity"/>
    <property type="evidence" value="ECO:0000314"/>
    <property type="project" value="UniProtKB"/>
</dbReference>
<dbReference type="GO" id="GO:0006657">
    <property type="term" value="P:CDP-choline pathway"/>
    <property type="evidence" value="ECO:0000318"/>
    <property type="project" value="GO_Central"/>
</dbReference>
<dbReference type="GO" id="GO:0042149">
    <property type="term" value="P:cellular response to glucose starvation"/>
    <property type="evidence" value="ECO:0000314"/>
    <property type="project" value="UniProtKB"/>
</dbReference>
<dbReference type="GO" id="GO:1905691">
    <property type="term" value="P:lipid droplet disassembly"/>
    <property type="evidence" value="ECO:0000314"/>
    <property type="project" value="UniProtKB"/>
</dbReference>
<dbReference type="GO" id="GO:0006629">
    <property type="term" value="P:lipid metabolic process"/>
    <property type="evidence" value="ECO:0000304"/>
    <property type="project" value="ProtInc"/>
</dbReference>
<dbReference type="GO" id="GO:0006869">
    <property type="term" value="P:lipid transport"/>
    <property type="evidence" value="ECO:0000304"/>
    <property type="project" value="ProtInc"/>
</dbReference>
<dbReference type="GO" id="GO:0006656">
    <property type="term" value="P:phosphatidylcholine biosynthetic process"/>
    <property type="evidence" value="ECO:0000314"/>
    <property type="project" value="UniProt"/>
</dbReference>
<dbReference type="GO" id="GO:0006646">
    <property type="term" value="P:phosphatidylethanolamine biosynthetic process"/>
    <property type="evidence" value="ECO:0000314"/>
    <property type="project" value="UniProt"/>
</dbReference>
<dbReference type="CDD" id="cd05156">
    <property type="entry name" value="ChoK_euk"/>
    <property type="match status" value="1"/>
</dbReference>
<dbReference type="FunFam" id="3.90.1200.10:FF:000005">
    <property type="entry name" value="Choline kinase alpha"/>
    <property type="match status" value="1"/>
</dbReference>
<dbReference type="Gene3D" id="3.90.1200.10">
    <property type="match status" value="1"/>
</dbReference>
<dbReference type="Gene3D" id="3.30.200.20">
    <property type="entry name" value="Phosphorylase Kinase, domain 1"/>
    <property type="match status" value="1"/>
</dbReference>
<dbReference type="InterPro" id="IPR011009">
    <property type="entry name" value="Kinase-like_dom_sf"/>
</dbReference>
<dbReference type="PANTHER" id="PTHR22603:SF36">
    <property type="entry name" value="CHOLINE KINASE ALPHA"/>
    <property type="match status" value="1"/>
</dbReference>
<dbReference type="PANTHER" id="PTHR22603">
    <property type="entry name" value="CHOLINE/ETHANOALAMINE KINASE"/>
    <property type="match status" value="1"/>
</dbReference>
<dbReference type="Pfam" id="PF01633">
    <property type="entry name" value="Choline_kinase"/>
    <property type="match status" value="1"/>
</dbReference>
<dbReference type="SUPFAM" id="SSF56112">
    <property type="entry name" value="Protein kinase-like (PK-like)"/>
    <property type="match status" value="1"/>
</dbReference>
<feature type="chain" id="PRO_0000206219" description="Choline kinase alpha">
    <location>
        <begin position="1"/>
        <end position="457"/>
    </location>
</feature>
<feature type="region of interest" description="Disordered" evidence="2">
    <location>
        <begin position="1"/>
        <end position="86"/>
    </location>
</feature>
<feature type="compositionally biased region" description="Low complexity" evidence="2">
    <location>
        <begin position="13"/>
        <end position="32"/>
    </location>
</feature>
<feature type="compositionally biased region" description="Pro residues" evidence="2">
    <location>
        <begin position="55"/>
        <end position="80"/>
    </location>
</feature>
<feature type="binding site" evidence="4 6 18 20">
    <location>
        <begin position="117"/>
        <end position="123"/>
    </location>
    <ligand>
        <name>ATP</name>
        <dbReference type="ChEBI" id="CHEBI:30616"/>
    </ligand>
</feature>
<feature type="binding site" evidence="4 19">
    <location>
        <begin position="119"/>
        <end position="121"/>
    </location>
    <ligand>
        <name>phosphocholine</name>
        <dbReference type="ChEBI" id="CHEBI:295975"/>
    </ligand>
</feature>
<feature type="binding site" evidence="4 6 18 20">
    <location>
        <position position="146"/>
    </location>
    <ligand>
        <name>ATP</name>
        <dbReference type="ChEBI" id="CHEBI:30616"/>
    </ligand>
</feature>
<feature type="binding site" evidence="4 6 18 20">
    <location>
        <begin position="207"/>
        <end position="213"/>
    </location>
    <ligand>
        <name>ATP</name>
        <dbReference type="ChEBI" id="CHEBI:30616"/>
    </ligand>
</feature>
<feature type="binding site" evidence="14">
    <location>
        <position position="308"/>
    </location>
    <ligand>
        <name>ATP</name>
        <dbReference type="ChEBI" id="CHEBI:30616"/>
    </ligand>
</feature>
<feature type="binding site" evidence="4 6 18 20">
    <location>
        <position position="330"/>
    </location>
    <ligand>
        <name>ATP</name>
        <dbReference type="ChEBI" id="CHEBI:30616"/>
    </ligand>
</feature>
<feature type="modified residue" description="N6-acetyllysine" evidence="9">
    <location>
        <position position="247"/>
    </location>
</feature>
<feature type="modified residue" description="Phosphoserine" evidence="9">
    <location>
        <position position="279"/>
    </location>
</feature>
<feature type="splice variant" id="VSP_009683" description="In isoform 2." evidence="11">
    <location>
        <begin position="155"/>
        <end position="172"/>
    </location>
</feature>
<feature type="sequence variant" id="VAR_087712" description="In NEDMIMS; a functional model in yeast shows reduced choline kinase activity; dbSNP:rs765529707." evidence="10">
    <original>R</original>
    <variation>W</variation>
    <location>
        <position position="141"/>
    </location>
</feature>
<feature type="sequence variant" id="VAR_087713" description="In NEDMIMS; a functional model in yeast shows reduced choline kinase activity; dbSNP:rs763056271." evidence="10">
    <original>P</original>
    <variation>S</variation>
    <location>
        <position position="194"/>
    </location>
</feature>
<feature type="sequence variant" id="VAR_054863" description="In dbSNP:rs17853641." evidence="3">
    <original>S</original>
    <variation>G</variation>
    <location>
        <position position="220"/>
    </location>
</feature>
<feature type="sequence variant" id="VAR_087714" description="In NEDMIMS; dbSNP:rs2134518071." evidence="10">
    <original>F</original>
    <variation>L</variation>
    <location>
        <position position="341"/>
    </location>
</feature>
<feature type="sequence variant" id="VAR_054864" description="In dbSNP:rs17853642." evidence="3">
    <original>L</original>
    <variation>Q</variation>
    <location>
        <position position="422"/>
    </location>
</feature>
<feature type="mutagenesis site" description="Does not affect interaction with PLIN2 and PLIN3." evidence="9">
    <original>E</original>
    <variation>A</variation>
    <location>
        <position position="175"/>
    </location>
</feature>
<feature type="mutagenesis site" description="Does not affect interaction with PLIN2 and PLIN3." evidence="9">
    <original>MVL</original>
    <variation>AAA</variation>
    <location>
        <begin position="177"/>
        <end position="179"/>
    </location>
</feature>
<feature type="mutagenesis site" description="Does not affect interaction with PLIN2 and PLIN3." evidence="9">
    <original>VMF</original>
    <variation>AAA</variation>
    <location>
        <begin position="182"/>
        <end position="184"/>
    </location>
</feature>
<feature type="mutagenesis site" description="Abolished interaction with PLIN2 and PLIN3." evidence="9">
    <original>IL</original>
    <variation>AA</variation>
    <location>
        <begin position="186"/>
        <end position="187"/>
    </location>
</feature>
<feature type="mutagenesis site" description="Mimics acetylation; promoting monomerization, leading to decreased choline kinase activity. Increased lipolysis of lipid droplets." evidence="9">
    <original>K</original>
    <variation>Q</variation>
    <location>
        <position position="247"/>
    </location>
</feature>
<feature type="mutagenesis site" description="Abolished acetylation by KAT5, leading to prevent conversion into a tyrosine-protein kinase." evidence="9">
    <original>K</original>
    <variation>R</variation>
    <location>
        <position position="247"/>
    </location>
</feature>
<feature type="mutagenesis site" description="Abolished phosphorylation by AMPK, preventing localization to lipid droplets and subsequent acetylation by KAT5." evidence="9">
    <original>S</original>
    <variation>A</variation>
    <location>
        <position position="279"/>
    </location>
</feature>
<feature type="mutagenesis site" description="Mimics phosphorylation; promoting localization to lipid droplets." evidence="9">
    <original>S</original>
    <variation>D</variation>
    <location>
        <position position="279"/>
    </location>
</feature>
<feature type="sequence conflict" description="In Ref. 1; BAA01547." evidence="14" ref="1">
    <original>GGQQPP</original>
    <variation>APTAA</variation>
    <location>
        <begin position="49"/>
        <end position="54"/>
    </location>
</feature>
<feature type="sequence conflict" description="In Ref. 1; BAA01547." evidence="14" ref="1">
    <original>T</original>
    <variation>A</variation>
    <location>
        <position position="87"/>
    </location>
</feature>
<feature type="sequence conflict" description="In Ref. 1; BAA01547." evidence="14" ref="1">
    <original>M</original>
    <variation>V</variation>
    <location>
        <position position="154"/>
    </location>
</feature>
<feature type="helix" evidence="24">
    <location>
        <begin position="85"/>
        <end position="98"/>
    </location>
</feature>
<feature type="helix" evidence="24">
    <location>
        <begin position="101"/>
        <end position="105"/>
    </location>
</feature>
<feature type="helix" evidence="24">
    <location>
        <begin position="108"/>
        <end position="110"/>
    </location>
</feature>
<feature type="strand" evidence="24">
    <location>
        <begin position="112"/>
        <end position="117"/>
    </location>
</feature>
<feature type="strand" evidence="24">
    <location>
        <begin position="119"/>
        <end position="128"/>
    </location>
</feature>
<feature type="strand" evidence="25">
    <location>
        <begin position="136"/>
        <end position="138"/>
    </location>
</feature>
<feature type="strand" evidence="24">
    <location>
        <begin position="141"/>
        <end position="147"/>
    </location>
</feature>
<feature type="helix" evidence="24">
    <location>
        <begin position="176"/>
        <end position="189"/>
    </location>
</feature>
<feature type="strand" evidence="24">
    <location>
        <begin position="196"/>
        <end position="200"/>
    </location>
</feature>
<feature type="strand" evidence="24">
    <location>
        <begin position="203"/>
        <end position="207"/>
    </location>
</feature>
<feature type="strand" evidence="24">
    <location>
        <begin position="211"/>
        <end position="213"/>
    </location>
</feature>
<feature type="helix" evidence="24">
    <location>
        <begin position="216"/>
        <end position="220"/>
    </location>
</feature>
<feature type="helix" evidence="24">
    <location>
        <begin position="222"/>
        <end position="236"/>
    </location>
</feature>
<feature type="helix" evidence="24">
    <location>
        <begin position="248"/>
        <end position="262"/>
    </location>
</feature>
<feature type="helix" evidence="24">
    <location>
        <begin position="268"/>
        <end position="278"/>
    </location>
</feature>
<feature type="helix" evidence="24">
    <location>
        <begin position="282"/>
        <end position="294"/>
    </location>
</feature>
<feature type="strand" evidence="24">
    <location>
        <begin position="300"/>
        <end position="303"/>
    </location>
</feature>
<feature type="helix" evidence="24">
    <location>
        <begin position="309"/>
        <end position="311"/>
    </location>
</feature>
<feature type="strand" evidence="24">
    <location>
        <begin position="312"/>
        <end position="315"/>
    </location>
</feature>
<feature type="helix" evidence="22">
    <location>
        <begin position="318"/>
        <end position="320"/>
    </location>
</feature>
<feature type="strand" evidence="25">
    <location>
        <begin position="322"/>
        <end position="324"/>
    </location>
</feature>
<feature type="strand" evidence="24">
    <location>
        <begin position="326"/>
        <end position="328"/>
    </location>
</feature>
<feature type="strand" evidence="24">
    <location>
        <begin position="335"/>
        <end position="338"/>
    </location>
</feature>
<feature type="helix" evidence="24">
    <location>
        <begin position="339"/>
        <end position="349"/>
    </location>
</feature>
<feature type="strand" evidence="23">
    <location>
        <begin position="352"/>
        <end position="354"/>
    </location>
</feature>
<feature type="helix" evidence="24">
    <location>
        <begin position="366"/>
        <end position="368"/>
    </location>
</feature>
<feature type="helix" evidence="24">
    <location>
        <begin position="372"/>
        <end position="386"/>
    </location>
</feature>
<feature type="helix" evidence="24">
    <location>
        <begin position="388"/>
        <end position="392"/>
    </location>
</feature>
<feature type="helix" evidence="24">
    <location>
        <begin position="395"/>
        <end position="430"/>
    </location>
</feature>
<feature type="strand" evidence="22">
    <location>
        <begin position="433"/>
        <end position="435"/>
    </location>
</feature>
<feature type="helix" evidence="24">
    <location>
        <begin position="437"/>
        <end position="455"/>
    </location>
</feature>
<proteinExistence type="evidence at protein level"/>
<sequence>MKTKFCTGGEAEPSPLGLLLSCGSGSAAPAPGVGQQRDAASDLESKQLGGQQPPLALPPPPPLPLPLPLPQPPPPQPPADEQPEPRTRRRAYLWCKEFLPGAWRGLREDEFHISVIRGGLSNMLFQCSLPDTTATLGDEPRKVLLRLYGAILQMRSCNKEGSEQAQKENEFQGAEAMVLESVMFAILAERSLGPKLYGIFPQGRLEQFIPSRRLDTEELSLPDISAEIAEKMATFHGMKMPFNKEPKWLFGTMEKYLKEVLRIKFTEESRIKKLHKLLSYNLPLELENLRSLLESTPSPVVFCHNDCQEGNILLLEGRENSEKQKLMLIDFEYSSYNYRGFDIGNHFCEWMYDYSYEKYPFFRANIRKYPTKKQQLHFISSYLPAFQNDFENLSTEEKSIIKEEMLLEVNRFALASHFLWGLWSIVQAKISSIEFGYMDYAQARFDAYFHQKRKLGV</sequence>